<evidence type="ECO:0000255" key="1">
    <source>
        <dbReference type="HAMAP-Rule" id="MF_01366"/>
    </source>
</evidence>
<evidence type="ECO:0000305" key="2"/>
<accession>A9BHB6</accession>
<sequence>MNSKLVQPSYTAKKEDIKREWFLIDAKDYTLGRLASRIAKILQGKHKPTYTPYIDSGDFVVVVNAEKIKLSKDKKENKIYRRYSGYPGGLKEISFEQMQSKHPERIIQLAVKGMMPKTILAKHMMKKLKVYVGPDHPHQAQNPKEIKIENI</sequence>
<proteinExistence type="inferred from homology"/>
<protein>
    <recommendedName>
        <fullName evidence="1">Large ribosomal subunit protein uL13</fullName>
    </recommendedName>
    <alternativeName>
        <fullName evidence="2">50S ribosomal protein L13</fullName>
    </alternativeName>
</protein>
<keyword id="KW-0687">Ribonucleoprotein</keyword>
<keyword id="KW-0689">Ribosomal protein</keyword>
<reference key="1">
    <citation type="submission" date="2007-11" db="EMBL/GenBank/DDBJ databases">
        <title>Complete sequence of Petroga mobilis SJ95.</title>
        <authorList>
            <consortium name="US DOE Joint Genome Institute"/>
            <person name="Copeland A."/>
            <person name="Lucas S."/>
            <person name="Lapidus A."/>
            <person name="Barry K."/>
            <person name="Glavina del Rio T."/>
            <person name="Dalin E."/>
            <person name="Tice H."/>
            <person name="Pitluck S."/>
            <person name="Meincke L."/>
            <person name="Brettin T."/>
            <person name="Bruce D."/>
            <person name="Detter J.C."/>
            <person name="Han C."/>
            <person name="Kuske C.R."/>
            <person name="Schmutz J."/>
            <person name="Larimer F."/>
            <person name="Land M."/>
            <person name="Hauser L."/>
            <person name="Kyrpides N."/>
            <person name="Mikhailova N."/>
            <person name="Noll K."/>
            <person name="Richardson P."/>
        </authorList>
    </citation>
    <scope>NUCLEOTIDE SEQUENCE [LARGE SCALE GENOMIC DNA]</scope>
    <source>
        <strain>DSM 10674 / SJ95</strain>
    </source>
</reference>
<comment type="function">
    <text evidence="1">This protein is one of the early assembly proteins of the 50S ribosomal subunit, although it is not seen to bind rRNA by itself. It is important during the early stages of 50S assembly.</text>
</comment>
<comment type="subunit">
    <text evidence="1">Part of the 50S ribosomal subunit.</text>
</comment>
<comment type="similarity">
    <text evidence="1">Belongs to the universal ribosomal protein uL13 family.</text>
</comment>
<organism>
    <name type="scientific">Petrotoga mobilis (strain DSM 10674 / SJ95)</name>
    <dbReference type="NCBI Taxonomy" id="403833"/>
    <lineage>
        <taxon>Bacteria</taxon>
        <taxon>Thermotogati</taxon>
        <taxon>Thermotogota</taxon>
        <taxon>Thermotogae</taxon>
        <taxon>Petrotogales</taxon>
        <taxon>Petrotogaceae</taxon>
        <taxon>Petrotoga</taxon>
    </lineage>
</organism>
<gene>
    <name evidence="1" type="primary">rplM</name>
    <name type="ordered locus">Pmob_0801</name>
</gene>
<dbReference type="EMBL" id="CP000879">
    <property type="protein sequence ID" value="ABX31525.1"/>
    <property type="molecule type" value="Genomic_DNA"/>
</dbReference>
<dbReference type="RefSeq" id="WP_012208628.1">
    <property type="nucleotide sequence ID" value="NC_010003.1"/>
</dbReference>
<dbReference type="SMR" id="A9BHB6"/>
<dbReference type="STRING" id="403833.Pmob_0801"/>
<dbReference type="KEGG" id="pmo:Pmob_0801"/>
<dbReference type="eggNOG" id="COG0102">
    <property type="taxonomic scope" value="Bacteria"/>
</dbReference>
<dbReference type="HOGENOM" id="CLU_082184_2_2_0"/>
<dbReference type="OrthoDB" id="9801330at2"/>
<dbReference type="Proteomes" id="UP000000789">
    <property type="component" value="Chromosome"/>
</dbReference>
<dbReference type="GO" id="GO:0022625">
    <property type="term" value="C:cytosolic large ribosomal subunit"/>
    <property type="evidence" value="ECO:0007669"/>
    <property type="project" value="TreeGrafter"/>
</dbReference>
<dbReference type="GO" id="GO:0003729">
    <property type="term" value="F:mRNA binding"/>
    <property type="evidence" value="ECO:0007669"/>
    <property type="project" value="TreeGrafter"/>
</dbReference>
<dbReference type="GO" id="GO:0003735">
    <property type="term" value="F:structural constituent of ribosome"/>
    <property type="evidence" value="ECO:0007669"/>
    <property type="project" value="InterPro"/>
</dbReference>
<dbReference type="GO" id="GO:0017148">
    <property type="term" value="P:negative regulation of translation"/>
    <property type="evidence" value="ECO:0007669"/>
    <property type="project" value="TreeGrafter"/>
</dbReference>
<dbReference type="GO" id="GO:0006412">
    <property type="term" value="P:translation"/>
    <property type="evidence" value="ECO:0007669"/>
    <property type="project" value="UniProtKB-UniRule"/>
</dbReference>
<dbReference type="CDD" id="cd00392">
    <property type="entry name" value="Ribosomal_L13"/>
    <property type="match status" value="1"/>
</dbReference>
<dbReference type="FunFam" id="3.90.1180.10:FF:000001">
    <property type="entry name" value="50S ribosomal protein L13"/>
    <property type="match status" value="1"/>
</dbReference>
<dbReference type="Gene3D" id="3.90.1180.10">
    <property type="entry name" value="Ribosomal protein L13"/>
    <property type="match status" value="1"/>
</dbReference>
<dbReference type="HAMAP" id="MF_01366">
    <property type="entry name" value="Ribosomal_uL13"/>
    <property type="match status" value="1"/>
</dbReference>
<dbReference type="InterPro" id="IPR005822">
    <property type="entry name" value="Ribosomal_uL13"/>
</dbReference>
<dbReference type="InterPro" id="IPR005823">
    <property type="entry name" value="Ribosomal_uL13_bac-type"/>
</dbReference>
<dbReference type="InterPro" id="IPR036899">
    <property type="entry name" value="Ribosomal_uL13_sf"/>
</dbReference>
<dbReference type="NCBIfam" id="TIGR01066">
    <property type="entry name" value="rplM_bact"/>
    <property type="match status" value="1"/>
</dbReference>
<dbReference type="PANTHER" id="PTHR11545:SF2">
    <property type="entry name" value="LARGE RIBOSOMAL SUBUNIT PROTEIN UL13M"/>
    <property type="match status" value="1"/>
</dbReference>
<dbReference type="PANTHER" id="PTHR11545">
    <property type="entry name" value="RIBOSOMAL PROTEIN L13"/>
    <property type="match status" value="1"/>
</dbReference>
<dbReference type="Pfam" id="PF00572">
    <property type="entry name" value="Ribosomal_L13"/>
    <property type="match status" value="1"/>
</dbReference>
<dbReference type="PIRSF" id="PIRSF002181">
    <property type="entry name" value="Ribosomal_L13"/>
    <property type="match status" value="1"/>
</dbReference>
<dbReference type="SUPFAM" id="SSF52161">
    <property type="entry name" value="Ribosomal protein L13"/>
    <property type="match status" value="1"/>
</dbReference>
<feature type="chain" id="PRO_1000214960" description="Large ribosomal subunit protein uL13">
    <location>
        <begin position="1"/>
        <end position="151"/>
    </location>
</feature>
<name>RL13_PETMO</name>